<keyword id="KW-0067">ATP-binding</keyword>
<keyword id="KW-0131">Cell cycle</keyword>
<keyword id="KW-0132">Cell division</keyword>
<keyword id="KW-0133">Cell shape</keyword>
<keyword id="KW-0961">Cell wall biogenesis/degradation</keyword>
<keyword id="KW-0963">Cytoplasm</keyword>
<keyword id="KW-0436">Ligase</keyword>
<keyword id="KW-0547">Nucleotide-binding</keyword>
<keyword id="KW-0573">Peptidoglycan synthesis</keyword>
<keyword id="KW-1185">Reference proteome</keyword>
<accession>Q92NM0</accession>
<reference key="1">
    <citation type="journal article" date="2001" name="Proc. Natl. Acad. Sci. U.S.A.">
        <title>Analysis of the chromosome sequence of the legume symbiont Sinorhizobium meliloti strain 1021.</title>
        <authorList>
            <person name="Capela D."/>
            <person name="Barloy-Hubler F."/>
            <person name="Gouzy J."/>
            <person name="Bothe G."/>
            <person name="Ampe F."/>
            <person name="Batut J."/>
            <person name="Boistard P."/>
            <person name="Becker A."/>
            <person name="Boutry M."/>
            <person name="Cadieu E."/>
            <person name="Dreano S."/>
            <person name="Gloux S."/>
            <person name="Godrie T."/>
            <person name="Goffeau A."/>
            <person name="Kahn D."/>
            <person name="Kiss E."/>
            <person name="Lelaure V."/>
            <person name="Masuy D."/>
            <person name="Pohl T."/>
            <person name="Portetelle D."/>
            <person name="Puehler A."/>
            <person name="Purnelle B."/>
            <person name="Ramsperger U."/>
            <person name="Renard C."/>
            <person name="Thebault P."/>
            <person name="Vandenbol M."/>
            <person name="Weidner S."/>
            <person name="Galibert F."/>
        </authorList>
    </citation>
    <scope>NUCLEOTIDE SEQUENCE [LARGE SCALE GENOMIC DNA]</scope>
    <source>
        <strain>1021</strain>
    </source>
</reference>
<reference key="2">
    <citation type="journal article" date="2001" name="Science">
        <title>The composite genome of the legume symbiont Sinorhizobium meliloti.</title>
        <authorList>
            <person name="Galibert F."/>
            <person name="Finan T.M."/>
            <person name="Long S.R."/>
            <person name="Puehler A."/>
            <person name="Abola P."/>
            <person name="Ampe F."/>
            <person name="Barloy-Hubler F."/>
            <person name="Barnett M.J."/>
            <person name="Becker A."/>
            <person name="Boistard P."/>
            <person name="Bothe G."/>
            <person name="Boutry M."/>
            <person name="Bowser L."/>
            <person name="Buhrmester J."/>
            <person name="Cadieu E."/>
            <person name="Capela D."/>
            <person name="Chain P."/>
            <person name="Cowie A."/>
            <person name="Davis R.W."/>
            <person name="Dreano S."/>
            <person name="Federspiel N.A."/>
            <person name="Fisher R.F."/>
            <person name="Gloux S."/>
            <person name="Godrie T."/>
            <person name="Goffeau A."/>
            <person name="Golding B."/>
            <person name="Gouzy J."/>
            <person name="Gurjal M."/>
            <person name="Hernandez-Lucas I."/>
            <person name="Hong A."/>
            <person name="Huizar L."/>
            <person name="Hyman R.W."/>
            <person name="Jones T."/>
            <person name="Kahn D."/>
            <person name="Kahn M.L."/>
            <person name="Kalman S."/>
            <person name="Keating D.H."/>
            <person name="Kiss E."/>
            <person name="Komp C."/>
            <person name="Lelaure V."/>
            <person name="Masuy D."/>
            <person name="Palm C."/>
            <person name="Peck M.C."/>
            <person name="Pohl T.M."/>
            <person name="Portetelle D."/>
            <person name="Purnelle B."/>
            <person name="Ramsperger U."/>
            <person name="Surzycki R."/>
            <person name="Thebault P."/>
            <person name="Vandenbol M."/>
            <person name="Vorhoelter F.J."/>
            <person name="Weidner S."/>
            <person name="Wells D.H."/>
            <person name="Wong K."/>
            <person name="Yeh K.-C."/>
            <person name="Batut J."/>
        </authorList>
    </citation>
    <scope>NUCLEOTIDE SEQUENCE [LARGE SCALE GENOMIC DNA]</scope>
    <source>
        <strain>1021</strain>
    </source>
</reference>
<dbReference type="EC" id="6.3.2.8" evidence="1"/>
<dbReference type="EMBL" id="AL591688">
    <property type="protein sequence ID" value="CAC46754.1"/>
    <property type="molecule type" value="Genomic_DNA"/>
</dbReference>
<dbReference type="RefSeq" id="NP_386281.1">
    <property type="nucleotide sequence ID" value="NC_003047.1"/>
</dbReference>
<dbReference type="RefSeq" id="WP_003529126.1">
    <property type="nucleotide sequence ID" value="NC_003047.1"/>
</dbReference>
<dbReference type="SMR" id="Q92NM0"/>
<dbReference type="EnsemblBacteria" id="CAC46754">
    <property type="protein sequence ID" value="CAC46754"/>
    <property type="gene ID" value="SMc01867"/>
</dbReference>
<dbReference type="GeneID" id="89576527"/>
<dbReference type="KEGG" id="sme:SMc01867"/>
<dbReference type="PATRIC" id="fig|266834.11.peg.3641"/>
<dbReference type="eggNOG" id="COG0773">
    <property type="taxonomic scope" value="Bacteria"/>
</dbReference>
<dbReference type="HOGENOM" id="CLU_028104_2_2_5"/>
<dbReference type="OrthoDB" id="9804126at2"/>
<dbReference type="UniPathway" id="UPA00219"/>
<dbReference type="Proteomes" id="UP000001976">
    <property type="component" value="Chromosome"/>
</dbReference>
<dbReference type="GO" id="GO:0005737">
    <property type="term" value="C:cytoplasm"/>
    <property type="evidence" value="ECO:0007669"/>
    <property type="project" value="UniProtKB-SubCell"/>
</dbReference>
<dbReference type="GO" id="GO:0005524">
    <property type="term" value="F:ATP binding"/>
    <property type="evidence" value="ECO:0007669"/>
    <property type="project" value="UniProtKB-UniRule"/>
</dbReference>
<dbReference type="GO" id="GO:0008763">
    <property type="term" value="F:UDP-N-acetylmuramate-L-alanine ligase activity"/>
    <property type="evidence" value="ECO:0007669"/>
    <property type="project" value="UniProtKB-UniRule"/>
</dbReference>
<dbReference type="GO" id="GO:0051301">
    <property type="term" value="P:cell division"/>
    <property type="evidence" value="ECO:0007669"/>
    <property type="project" value="UniProtKB-KW"/>
</dbReference>
<dbReference type="GO" id="GO:0071555">
    <property type="term" value="P:cell wall organization"/>
    <property type="evidence" value="ECO:0007669"/>
    <property type="project" value="UniProtKB-KW"/>
</dbReference>
<dbReference type="GO" id="GO:0009252">
    <property type="term" value="P:peptidoglycan biosynthetic process"/>
    <property type="evidence" value="ECO:0007669"/>
    <property type="project" value="UniProtKB-UniRule"/>
</dbReference>
<dbReference type="GO" id="GO:0008360">
    <property type="term" value="P:regulation of cell shape"/>
    <property type="evidence" value="ECO:0007669"/>
    <property type="project" value="UniProtKB-KW"/>
</dbReference>
<dbReference type="Gene3D" id="3.90.190.20">
    <property type="entry name" value="Mur ligase, C-terminal domain"/>
    <property type="match status" value="1"/>
</dbReference>
<dbReference type="Gene3D" id="3.40.1190.10">
    <property type="entry name" value="Mur-like, catalytic domain"/>
    <property type="match status" value="1"/>
</dbReference>
<dbReference type="Gene3D" id="3.40.50.720">
    <property type="entry name" value="NAD(P)-binding Rossmann-like Domain"/>
    <property type="match status" value="1"/>
</dbReference>
<dbReference type="HAMAP" id="MF_00046">
    <property type="entry name" value="MurC"/>
    <property type="match status" value="1"/>
</dbReference>
<dbReference type="InterPro" id="IPR036565">
    <property type="entry name" value="Mur-like_cat_sf"/>
</dbReference>
<dbReference type="InterPro" id="IPR004101">
    <property type="entry name" value="Mur_ligase_C"/>
</dbReference>
<dbReference type="InterPro" id="IPR036615">
    <property type="entry name" value="Mur_ligase_C_dom_sf"/>
</dbReference>
<dbReference type="InterPro" id="IPR013221">
    <property type="entry name" value="Mur_ligase_cen"/>
</dbReference>
<dbReference type="InterPro" id="IPR000713">
    <property type="entry name" value="Mur_ligase_N"/>
</dbReference>
<dbReference type="InterPro" id="IPR050061">
    <property type="entry name" value="MurCDEF_pg_biosynth"/>
</dbReference>
<dbReference type="InterPro" id="IPR005758">
    <property type="entry name" value="UDP-N-AcMur_Ala_ligase_MurC"/>
</dbReference>
<dbReference type="NCBIfam" id="TIGR01082">
    <property type="entry name" value="murC"/>
    <property type="match status" value="1"/>
</dbReference>
<dbReference type="PANTHER" id="PTHR43445:SF3">
    <property type="entry name" value="UDP-N-ACETYLMURAMATE--L-ALANINE LIGASE"/>
    <property type="match status" value="1"/>
</dbReference>
<dbReference type="PANTHER" id="PTHR43445">
    <property type="entry name" value="UDP-N-ACETYLMURAMATE--L-ALANINE LIGASE-RELATED"/>
    <property type="match status" value="1"/>
</dbReference>
<dbReference type="Pfam" id="PF01225">
    <property type="entry name" value="Mur_ligase"/>
    <property type="match status" value="1"/>
</dbReference>
<dbReference type="Pfam" id="PF02875">
    <property type="entry name" value="Mur_ligase_C"/>
    <property type="match status" value="1"/>
</dbReference>
<dbReference type="Pfam" id="PF08245">
    <property type="entry name" value="Mur_ligase_M"/>
    <property type="match status" value="1"/>
</dbReference>
<dbReference type="SUPFAM" id="SSF51984">
    <property type="entry name" value="MurCD N-terminal domain"/>
    <property type="match status" value="1"/>
</dbReference>
<dbReference type="SUPFAM" id="SSF53623">
    <property type="entry name" value="MurD-like peptide ligases, catalytic domain"/>
    <property type="match status" value="1"/>
</dbReference>
<dbReference type="SUPFAM" id="SSF53244">
    <property type="entry name" value="MurD-like peptide ligases, peptide-binding domain"/>
    <property type="match status" value="1"/>
</dbReference>
<proteinExistence type="inferred from homology"/>
<organism>
    <name type="scientific">Rhizobium meliloti (strain 1021)</name>
    <name type="common">Ensifer meliloti</name>
    <name type="synonym">Sinorhizobium meliloti</name>
    <dbReference type="NCBI Taxonomy" id="266834"/>
    <lineage>
        <taxon>Bacteria</taxon>
        <taxon>Pseudomonadati</taxon>
        <taxon>Pseudomonadota</taxon>
        <taxon>Alphaproteobacteria</taxon>
        <taxon>Hyphomicrobiales</taxon>
        <taxon>Rhizobiaceae</taxon>
        <taxon>Sinorhizobium/Ensifer group</taxon>
        <taxon>Sinorhizobium</taxon>
    </lineage>
</organism>
<evidence type="ECO:0000255" key="1">
    <source>
        <dbReference type="HAMAP-Rule" id="MF_00046"/>
    </source>
</evidence>
<name>MURC_RHIME</name>
<sequence>MKMPKTIGLVHFIGIGGIGMSGIAEVLHNLGHRVQGSDQADSANVQRLREKGISISIGHKAENLGDAEVVVVSTAIKKDNPELIAAREKFLPVVRRAEMLAELMRFRNAIAIGGTHGKTTTTSMVAALLDAGGLDPTVINGGIINAYGTNARMGAGEWMVVEADESDGTFLKLPADIAVVTNIDPEHLDHYGSFDAVRAAFRQFVENVPFYGFGVLCLDHPEVQSMVGKIEDRKVVTYGENPQADVRFHNIRMDGATSIFDIEIRRRRTGQVIEIKDLRLPMPGRHNVSNATAAVAVAQRLGIKPEDIARGLATFGGVKRRFTLTGEWNGARIFDDYGHHPVEIRAVLRAAREACQGRIVAVHQPHRYSRLSSLFEDFTSCFNDADTILLAPVYAAGEEAIEGVSSEALVDRIKAAGHRDARHVPGQEALAPVIAKIAQPGDFVVLLGAGSITYWAAALPKQLAEISGNRA</sequence>
<comment type="function">
    <text evidence="1">Cell wall formation.</text>
</comment>
<comment type="catalytic activity">
    <reaction evidence="1">
        <text>UDP-N-acetyl-alpha-D-muramate + L-alanine + ATP = UDP-N-acetyl-alpha-D-muramoyl-L-alanine + ADP + phosphate + H(+)</text>
        <dbReference type="Rhea" id="RHEA:23372"/>
        <dbReference type="ChEBI" id="CHEBI:15378"/>
        <dbReference type="ChEBI" id="CHEBI:30616"/>
        <dbReference type="ChEBI" id="CHEBI:43474"/>
        <dbReference type="ChEBI" id="CHEBI:57972"/>
        <dbReference type="ChEBI" id="CHEBI:70757"/>
        <dbReference type="ChEBI" id="CHEBI:83898"/>
        <dbReference type="ChEBI" id="CHEBI:456216"/>
        <dbReference type="EC" id="6.3.2.8"/>
    </reaction>
</comment>
<comment type="pathway">
    <text evidence="1">Cell wall biogenesis; peptidoglycan biosynthesis.</text>
</comment>
<comment type="subcellular location">
    <subcellularLocation>
        <location evidence="1">Cytoplasm</location>
    </subcellularLocation>
</comment>
<comment type="similarity">
    <text evidence="1">Belongs to the MurCDEF family.</text>
</comment>
<protein>
    <recommendedName>
        <fullName evidence="1">UDP-N-acetylmuramate--L-alanine ligase</fullName>
        <ecNumber evidence="1">6.3.2.8</ecNumber>
    </recommendedName>
    <alternativeName>
        <fullName evidence="1">UDP-N-acetylmuramoyl-L-alanine synthetase</fullName>
    </alternativeName>
</protein>
<feature type="chain" id="PRO_0000182140" description="UDP-N-acetylmuramate--L-alanine ligase">
    <location>
        <begin position="1"/>
        <end position="471"/>
    </location>
</feature>
<feature type="binding site" evidence="1">
    <location>
        <begin position="114"/>
        <end position="120"/>
    </location>
    <ligand>
        <name>ATP</name>
        <dbReference type="ChEBI" id="CHEBI:30616"/>
    </ligand>
</feature>
<gene>
    <name evidence="1" type="primary">murC</name>
    <name type="ordered locus">R02175</name>
    <name type="ORF">SMc01867</name>
</gene>